<accession>O35723</accession>
<accession>Q9DAN3</accession>
<accession>Q9DAN4</accession>
<dbReference type="EMBL" id="U95607">
    <property type="protein sequence ID" value="AAC13944.1"/>
    <property type="molecule type" value="mRNA"/>
</dbReference>
<dbReference type="EMBL" id="AK005690">
    <property type="protein sequence ID" value="BAB24188.1"/>
    <property type="molecule type" value="mRNA"/>
</dbReference>
<dbReference type="EMBL" id="AK005688">
    <property type="protein sequence ID" value="BAB24186.1"/>
    <property type="molecule type" value="mRNA"/>
</dbReference>
<dbReference type="CCDS" id="CCDS15142.1"/>
<dbReference type="RefSeq" id="NP_032325.2">
    <property type="nucleotide sequence ID" value="NM_008299.3"/>
</dbReference>
<dbReference type="SMR" id="O35723"/>
<dbReference type="BioGRID" id="200447">
    <property type="interactions" value="3"/>
</dbReference>
<dbReference type="FunCoup" id="O35723">
    <property type="interactions" value="402"/>
</dbReference>
<dbReference type="STRING" id="10090.ENSMUSP00000112703"/>
<dbReference type="iPTMnet" id="O35723"/>
<dbReference type="PhosphoSitePlus" id="O35723"/>
<dbReference type="SwissPalm" id="O35723"/>
<dbReference type="REPRODUCTION-2DPAGE" id="IPI00133874"/>
<dbReference type="REPRODUCTION-2DPAGE" id="O35723"/>
<dbReference type="PaxDb" id="10090-ENSMUSP00000112703"/>
<dbReference type="PeptideAtlas" id="O35723"/>
<dbReference type="ProteomicsDB" id="277349"/>
<dbReference type="DNASU" id="15504"/>
<dbReference type="GeneID" id="15504"/>
<dbReference type="KEGG" id="mmu:15504"/>
<dbReference type="AGR" id="MGI:1306822"/>
<dbReference type="CTD" id="414061"/>
<dbReference type="MGI" id="MGI:1306822">
    <property type="gene designation" value="Dnajb3"/>
</dbReference>
<dbReference type="eggNOG" id="KOG0714">
    <property type="taxonomic scope" value="Eukaryota"/>
</dbReference>
<dbReference type="InParanoid" id="O35723"/>
<dbReference type="OrthoDB" id="10250354at2759"/>
<dbReference type="PhylomeDB" id="O35723"/>
<dbReference type="BioGRID-ORCS" id="15504">
    <property type="hits" value="1 hit in 77 CRISPR screens"/>
</dbReference>
<dbReference type="CD-CODE" id="01CA17F3">
    <property type="entry name" value="Centrosome"/>
</dbReference>
<dbReference type="PRO" id="PR:O35723"/>
<dbReference type="Proteomes" id="UP000000589">
    <property type="component" value="Unplaced"/>
</dbReference>
<dbReference type="RNAct" id="O35723">
    <property type="molecule type" value="protein"/>
</dbReference>
<dbReference type="GO" id="GO:0001669">
    <property type="term" value="C:acrosomal vesicle"/>
    <property type="evidence" value="ECO:0000314"/>
    <property type="project" value="MGI"/>
</dbReference>
<dbReference type="GO" id="GO:0005813">
    <property type="term" value="C:centrosome"/>
    <property type="evidence" value="ECO:0000314"/>
    <property type="project" value="MGI"/>
</dbReference>
<dbReference type="GO" id="GO:0005737">
    <property type="term" value="C:cytoplasm"/>
    <property type="evidence" value="ECO:0000314"/>
    <property type="project" value="MGI"/>
</dbReference>
<dbReference type="GO" id="GO:0030544">
    <property type="term" value="F:Hsp70 protein binding"/>
    <property type="evidence" value="ECO:0007669"/>
    <property type="project" value="InterPro"/>
</dbReference>
<dbReference type="GO" id="GO:0051082">
    <property type="term" value="F:unfolded protein binding"/>
    <property type="evidence" value="ECO:0007669"/>
    <property type="project" value="InterPro"/>
</dbReference>
<dbReference type="GO" id="GO:0061077">
    <property type="term" value="P:chaperone-mediated protein folding"/>
    <property type="evidence" value="ECO:0007669"/>
    <property type="project" value="InterPro"/>
</dbReference>
<dbReference type="CDD" id="cd06257">
    <property type="entry name" value="DnaJ"/>
    <property type="match status" value="1"/>
</dbReference>
<dbReference type="FunFam" id="1.10.287.110:FF:000021">
    <property type="entry name" value="DnaJ (Hsp40) homolog, subfamily B, member 2"/>
    <property type="match status" value="1"/>
</dbReference>
<dbReference type="Gene3D" id="1.10.287.110">
    <property type="entry name" value="DnaJ domain"/>
    <property type="match status" value="1"/>
</dbReference>
<dbReference type="InterPro" id="IPR001623">
    <property type="entry name" value="DnaJ_domain"/>
</dbReference>
<dbReference type="InterPro" id="IPR018253">
    <property type="entry name" value="DnaJ_domain_CS"/>
</dbReference>
<dbReference type="InterPro" id="IPR043183">
    <property type="entry name" value="DNJB2/6-like"/>
</dbReference>
<dbReference type="InterPro" id="IPR036869">
    <property type="entry name" value="J_dom_sf"/>
</dbReference>
<dbReference type="PANTHER" id="PTHR45168">
    <property type="entry name" value="DNAJ HOMOLOG SUBFAMILY B MEMBER 2"/>
    <property type="match status" value="1"/>
</dbReference>
<dbReference type="PANTHER" id="PTHR45168:SF4">
    <property type="entry name" value="SIMILAR TO DNAJ HOMOLOG SUBFAMILY B MEMBER 6 (HEAT SHOCK PROTEIN J2) (HSJ-2) (MRJ) (MDJ4)"/>
    <property type="match status" value="1"/>
</dbReference>
<dbReference type="Pfam" id="PF00226">
    <property type="entry name" value="DnaJ"/>
    <property type="match status" value="1"/>
</dbReference>
<dbReference type="PRINTS" id="PR00625">
    <property type="entry name" value="JDOMAIN"/>
</dbReference>
<dbReference type="SMART" id="SM00271">
    <property type="entry name" value="DnaJ"/>
    <property type="match status" value="1"/>
</dbReference>
<dbReference type="SUPFAM" id="SSF46565">
    <property type="entry name" value="Chaperone J-domain"/>
    <property type="match status" value="1"/>
</dbReference>
<dbReference type="PROSITE" id="PS00636">
    <property type="entry name" value="DNAJ_1"/>
    <property type="match status" value="1"/>
</dbReference>
<dbReference type="PROSITE" id="PS50076">
    <property type="entry name" value="DNAJ_2"/>
    <property type="match status" value="1"/>
</dbReference>
<gene>
    <name type="primary">Dnajb3</name>
    <name type="synonym">Hsj3</name>
    <name type="synonym">Msj1</name>
</gene>
<organism>
    <name type="scientific">Mus musculus</name>
    <name type="common">Mouse</name>
    <dbReference type="NCBI Taxonomy" id="10090"/>
    <lineage>
        <taxon>Eukaryota</taxon>
        <taxon>Metazoa</taxon>
        <taxon>Chordata</taxon>
        <taxon>Craniata</taxon>
        <taxon>Vertebrata</taxon>
        <taxon>Euteleostomi</taxon>
        <taxon>Mammalia</taxon>
        <taxon>Eutheria</taxon>
        <taxon>Euarchontoglires</taxon>
        <taxon>Glires</taxon>
        <taxon>Rodentia</taxon>
        <taxon>Myomorpha</taxon>
        <taxon>Muroidea</taxon>
        <taxon>Muridae</taxon>
        <taxon>Murinae</taxon>
        <taxon>Mus</taxon>
        <taxon>Mus</taxon>
    </lineage>
</organism>
<proteinExistence type="evidence at transcript level"/>
<reference key="1">
    <citation type="journal article" date="1998" name="Exp. Cell Res.">
        <title>MSJ-1, a new member of the DNAJ family of proteins, is a male germ cell-specific gene product.</title>
        <authorList>
            <person name="Berruti G."/>
            <person name="Perego L."/>
            <person name="Borgonovo B."/>
            <person name="Martegani E."/>
        </authorList>
    </citation>
    <scope>NUCLEOTIDE SEQUENCE [MRNA]</scope>
    <source>
        <tissue>Testis</tissue>
    </source>
</reference>
<reference key="2">
    <citation type="journal article" date="2005" name="Science">
        <title>The transcriptional landscape of the mammalian genome.</title>
        <authorList>
            <person name="Carninci P."/>
            <person name="Kasukawa T."/>
            <person name="Katayama S."/>
            <person name="Gough J."/>
            <person name="Frith M.C."/>
            <person name="Maeda N."/>
            <person name="Oyama R."/>
            <person name="Ravasi T."/>
            <person name="Lenhard B."/>
            <person name="Wells C."/>
            <person name="Kodzius R."/>
            <person name="Shimokawa K."/>
            <person name="Bajic V.B."/>
            <person name="Brenner S.E."/>
            <person name="Batalov S."/>
            <person name="Forrest A.R."/>
            <person name="Zavolan M."/>
            <person name="Davis M.J."/>
            <person name="Wilming L.G."/>
            <person name="Aidinis V."/>
            <person name="Allen J.E."/>
            <person name="Ambesi-Impiombato A."/>
            <person name="Apweiler R."/>
            <person name="Aturaliya R.N."/>
            <person name="Bailey T.L."/>
            <person name="Bansal M."/>
            <person name="Baxter L."/>
            <person name="Beisel K.W."/>
            <person name="Bersano T."/>
            <person name="Bono H."/>
            <person name="Chalk A.M."/>
            <person name="Chiu K.P."/>
            <person name="Choudhary V."/>
            <person name="Christoffels A."/>
            <person name="Clutterbuck D.R."/>
            <person name="Crowe M.L."/>
            <person name="Dalla E."/>
            <person name="Dalrymple B.P."/>
            <person name="de Bono B."/>
            <person name="Della Gatta G."/>
            <person name="di Bernardo D."/>
            <person name="Down T."/>
            <person name="Engstrom P."/>
            <person name="Fagiolini M."/>
            <person name="Faulkner G."/>
            <person name="Fletcher C.F."/>
            <person name="Fukushima T."/>
            <person name="Furuno M."/>
            <person name="Futaki S."/>
            <person name="Gariboldi M."/>
            <person name="Georgii-Hemming P."/>
            <person name="Gingeras T.R."/>
            <person name="Gojobori T."/>
            <person name="Green R.E."/>
            <person name="Gustincich S."/>
            <person name="Harbers M."/>
            <person name="Hayashi Y."/>
            <person name="Hensch T.K."/>
            <person name="Hirokawa N."/>
            <person name="Hill D."/>
            <person name="Huminiecki L."/>
            <person name="Iacono M."/>
            <person name="Ikeo K."/>
            <person name="Iwama A."/>
            <person name="Ishikawa T."/>
            <person name="Jakt M."/>
            <person name="Kanapin A."/>
            <person name="Katoh M."/>
            <person name="Kawasawa Y."/>
            <person name="Kelso J."/>
            <person name="Kitamura H."/>
            <person name="Kitano H."/>
            <person name="Kollias G."/>
            <person name="Krishnan S.P."/>
            <person name="Kruger A."/>
            <person name="Kummerfeld S.K."/>
            <person name="Kurochkin I.V."/>
            <person name="Lareau L.F."/>
            <person name="Lazarevic D."/>
            <person name="Lipovich L."/>
            <person name="Liu J."/>
            <person name="Liuni S."/>
            <person name="McWilliam S."/>
            <person name="Madan Babu M."/>
            <person name="Madera M."/>
            <person name="Marchionni L."/>
            <person name="Matsuda H."/>
            <person name="Matsuzawa S."/>
            <person name="Miki H."/>
            <person name="Mignone F."/>
            <person name="Miyake S."/>
            <person name="Morris K."/>
            <person name="Mottagui-Tabar S."/>
            <person name="Mulder N."/>
            <person name="Nakano N."/>
            <person name="Nakauchi H."/>
            <person name="Ng P."/>
            <person name="Nilsson R."/>
            <person name="Nishiguchi S."/>
            <person name="Nishikawa S."/>
            <person name="Nori F."/>
            <person name="Ohara O."/>
            <person name="Okazaki Y."/>
            <person name="Orlando V."/>
            <person name="Pang K.C."/>
            <person name="Pavan W.J."/>
            <person name="Pavesi G."/>
            <person name="Pesole G."/>
            <person name="Petrovsky N."/>
            <person name="Piazza S."/>
            <person name="Reed J."/>
            <person name="Reid J.F."/>
            <person name="Ring B.Z."/>
            <person name="Ringwald M."/>
            <person name="Rost B."/>
            <person name="Ruan Y."/>
            <person name="Salzberg S.L."/>
            <person name="Sandelin A."/>
            <person name="Schneider C."/>
            <person name="Schoenbach C."/>
            <person name="Sekiguchi K."/>
            <person name="Semple C.A."/>
            <person name="Seno S."/>
            <person name="Sessa L."/>
            <person name="Sheng Y."/>
            <person name="Shibata Y."/>
            <person name="Shimada H."/>
            <person name="Shimada K."/>
            <person name="Silva D."/>
            <person name="Sinclair B."/>
            <person name="Sperling S."/>
            <person name="Stupka E."/>
            <person name="Sugiura K."/>
            <person name="Sultana R."/>
            <person name="Takenaka Y."/>
            <person name="Taki K."/>
            <person name="Tammoja K."/>
            <person name="Tan S.L."/>
            <person name="Tang S."/>
            <person name="Taylor M.S."/>
            <person name="Tegner J."/>
            <person name="Teichmann S.A."/>
            <person name="Ueda H.R."/>
            <person name="van Nimwegen E."/>
            <person name="Verardo R."/>
            <person name="Wei C.L."/>
            <person name="Yagi K."/>
            <person name="Yamanishi H."/>
            <person name="Zabarovsky E."/>
            <person name="Zhu S."/>
            <person name="Zimmer A."/>
            <person name="Hide W."/>
            <person name="Bult C."/>
            <person name="Grimmond S.M."/>
            <person name="Teasdale R.D."/>
            <person name="Liu E.T."/>
            <person name="Brusic V."/>
            <person name="Quackenbush J."/>
            <person name="Wahlestedt C."/>
            <person name="Mattick J.S."/>
            <person name="Hume D.A."/>
            <person name="Kai C."/>
            <person name="Sasaki D."/>
            <person name="Tomaru Y."/>
            <person name="Fukuda S."/>
            <person name="Kanamori-Katayama M."/>
            <person name="Suzuki M."/>
            <person name="Aoki J."/>
            <person name="Arakawa T."/>
            <person name="Iida J."/>
            <person name="Imamura K."/>
            <person name="Itoh M."/>
            <person name="Kato T."/>
            <person name="Kawaji H."/>
            <person name="Kawagashira N."/>
            <person name="Kawashima T."/>
            <person name="Kojima M."/>
            <person name="Kondo S."/>
            <person name="Konno H."/>
            <person name="Nakano K."/>
            <person name="Ninomiya N."/>
            <person name="Nishio T."/>
            <person name="Okada M."/>
            <person name="Plessy C."/>
            <person name="Shibata K."/>
            <person name="Shiraki T."/>
            <person name="Suzuki S."/>
            <person name="Tagami M."/>
            <person name="Waki K."/>
            <person name="Watahiki A."/>
            <person name="Okamura-Oho Y."/>
            <person name="Suzuki H."/>
            <person name="Kawai J."/>
            <person name="Hayashizaki Y."/>
        </authorList>
    </citation>
    <scope>NUCLEOTIDE SEQUENCE [LARGE SCALE MRNA]</scope>
    <source>
        <strain>C57BL/6J</strain>
        <tissue>Testis</tissue>
    </source>
</reference>
<name>DNJB3_MOUSE</name>
<evidence type="ECO:0000255" key="1">
    <source>
        <dbReference type="PROSITE-ProRule" id="PRU00286"/>
    </source>
</evidence>
<evidence type="ECO:0000305" key="2"/>
<protein>
    <recommendedName>
        <fullName>DnaJ homolog subfamily B member 3</fullName>
        <shortName>DnaJ protein homolog 3</shortName>
    </recommendedName>
    <alternativeName>
        <fullName>Heat shock protein J3</fullName>
        <shortName>HSJ-3</shortName>
    </alternativeName>
    <alternativeName>
        <fullName>MSJ-1</fullName>
    </alternativeName>
</protein>
<feature type="chain" id="PRO_0000071020" description="DnaJ homolog subfamily B member 3">
    <location>
        <begin position="1"/>
        <end position="242"/>
    </location>
</feature>
<feature type="domain" description="J" evidence="1">
    <location>
        <begin position="1"/>
        <end position="69"/>
    </location>
</feature>
<feature type="sequence conflict" description="In Ref. 2; BAB24186." evidence="2" ref="2">
    <original>V</original>
    <variation>M</variation>
    <location>
        <position position="71"/>
    </location>
</feature>
<feature type="sequence conflict" description="In Ref. 2; BAB24188." evidence="2" ref="2">
    <original>F</original>
    <variation>I</variation>
    <location>
        <position position="149"/>
    </location>
</feature>
<feature type="sequence conflict" description="In Ref. 2; BAB24188/BAB24186." evidence="2" ref="2">
    <original>R</original>
    <variation>K</variation>
    <location>
        <position position="233"/>
    </location>
</feature>
<comment type="function">
    <text evidence="2">May operate as a co-chaperone of the male germ cell- and haploid stage-specific Hsp70 proteins.</text>
</comment>
<comment type="tissue specificity">
    <text>Testis specific. Expression is confined to the germline without any contribution of the somatic components.</text>
</comment>
<comment type="developmental stage">
    <text>Its expression occurs in the postmeiotic phase of male germ cell development. First detected in 30 days old mice and thereafter into adulthood. Barely detectable in 20 days old mice and absent before this period.</text>
</comment>
<keyword id="KW-0143">Chaperone</keyword>
<keyword id="KW-1185">Reference proteome</keyword>
<sequence>MVDYYEVLGVPRQASAEAIRKAYRKLALKWHPDKNPEHKEEAERRFKQVAQAYEVLSDVRKREVYDRCGEVGEVGGGGAAGSPFHDAFQYVFSFRDPAEVFREFFGGHDPFSFDFFGGDPLENFFGDRRSTRGSRSRGAVPFSTSFTEFPGFGGGFASLDTGFTSFGSPGNSGLSSFSMSCGGGAAGNYKSVSTSTEIINGKKITTKRIVENGQERVEVEEDGELKSLIINGREQLLRINTQ</sequence>